<keyword id="KW-0238">DNA-binding</keyword>
<keyword id="KW-0804">Transcription</keyword>
<keyword id="KW-0805">Transcription regulation</keyword>
<accession>Q87LL6</accession>
<evidence type="ECO:0000255" key="1">
    <source>
        <dbReference type="HAMAP-Rule" id="MF_00513"/>
    </source>
</evidence>
<evidence type="ECO:0000305" key="2"/>
<feature type="chain" id="PRO_0000105650" description="HTH-type transcriptional regulator ArgP">
    <location>
        <begin position="1"/>
        <end position="298"/>
    </location>
</feature>
<feature type="domain" description="HTH lysR-type" evidence="1">
    <location>
        <begin position="4"/>
        <end position="60"/>
    </location>
</feature>
<feature type="DNA-binding region" description="H-T-H motif" evidence="1">
    <location>
        <begin position="21"/>
        <end position="40"/>
    </location>
</feature>
<sequence>MRGLDYKWIEALDAVVYQGSFERAAEHLFVSQSAISQRIKQLEKFLAQPVLIREQPPKPTPIGKKLLGLYRRVRLLEHEILPEIKNDTTTRPVQLSLATNADSLATWLLPALQDVMKTRQVELKLTIYGESRSIEKLKSGEVAGAISLESQAIPNCRADYLGRIDYVCVANPEFYQRYFSEGVNNQTLAKAPAVSYDQYDDLHKKFLTEHFNVRPDSVIHHNISSSEAFLKMALAGVAYCLIPRLQITDELEQGSLIDITPGFLMSYRIYWHHWQLETGVLQEISQAIVNYAQRHLPQ</sequence>
<proteinExistence type="inferred from homology"/>
<protein>
    <recommendedName>
        <fullName evidence="1">HTH-type transcriptional regulator ArgP</fullName>
    </recommendedName>
</protein>
<organism>
    <name type="scientific">Vibrio parahaemolyticus serotype O3:K6 (strain RIMD 2210633)</name>
    <dbReference type="NCBI Taxonomy" id="223926"/>
    <lineage>
        <taxon>Bacteria</taxon>
        <taxon>Pseudomonadati</taxon>
        <taxon>Pseudomonadota</taxon>
        <taxon>Gammaproteobacteria</taxon>
        <taxon>Vibrionales</taxon>
        <taxon>Vibrionaceae</taxon>
        <taxon>Vibrio</taxon>
    </lineage>
</organism>
<name>ARGP_VIBPA</name>
<reference key="1">
    <citation type="journal article" date="2003" name="Lancet">
        <title>Genome sequence of Vibrio parahaemolyticus: a pathogenic mechanism distinct from that of V. cholerae.</title>
        <authorList>
            <person name="Makino K."/>
            <person name="Oshima K."/>
            <person name="Kurokawa K."/>
            <person name="Yokoyama K."/>
            <person name="Uda T."/>
            <person name="Tagomori K."/>
            <person name="Iijima Y."/>
            <person name="Najima M."/>
            <person name="Nakano M."/>
            <person name="Yamashita A."/>
            <person name="Kubota Y."/>
            <person name="Kimura S."/>
            <person name="Yasunaga T."/>
            <person name="Honda T."/>
            <person name="Shinagawa H."/>
            <person name="Hattori M."/>
            <person name="Iida T."/>
        </authorList>
    </citation>
    <scope>NUCLEOTIDE SEQUENCE [LARGE SCALE GENOMIC DNA]</scope>
    <source>
        <strain>RIMD 2210633</strain>
    </source>
</reference>
<comment type="function">
    <text evidence="1">Controls the transcription of genes involved in arginine and lysine metabolism.</text>
</comment>
<comment type="subunit">
    <text evidence="1">Homodimer.</text>
</comment>
<comment type="similarity">
    <text evidence="2">Belongs to the LysR transcriptional regulatory family.</text>
</comment>
<gene>
    <name evidence="1" type="primary">argP</name>
    <name type="synonym">iciA</name>
    <name type="ordered locus">VP2595</name>
</gene>
<dbReference type="EMBL" id="BA000031">
    <property type="protein sequence ID" value="BAC60858.1"/>
    <property type="molecule type" value="Genomic_DNA"/>
</dbReference>
<dbReference type="RefSeq" id="NP_798974.1">
    <property type="nucleotide sequence ID" value="NC_004603.1"/>
</dbReference>
<dbReference type="RefSeq" id="WP_005482449.1">
    <property type="nucleotide sequence ID" value="NC_004603.1"/>
</dbReference>
<dbReference type="SMR" id="Q87LL6"/>
<dbReference type="GeneID" id="1190119"/>
<dbReference type="KEGG" id="vpa:VP2595"/>
<dbReference type="PATRIC" id="fig|223926.6.peg.2491"/>
<dbReference type="eggNOG" id="COG0583">
    <property type="taxonomic scope" value="Bacteria"/>
</dbReference>
<dbReference type="HOGENOM" id="CLU_063829_0_0_6"/>
<dbReference type="Proteomes" id="UP000002493">
    <property type="component" value="Chromosome 1"/>
</dbReference>
<dbReference type="GO" id="GO:0003677">
    <property type="term" value="F:DNA binding"/>
    <property type="evidence" value="ECO:0007669"/>
    <property type="project" value="UniProtKB-UniRule"/>
</dbReference>
<dbReference type="GO" id="GO:0003700">
    <property type="term" value="F:DNA-binding transcription factor activity"/>
    <property type="evidence" value="ECO:0007669"/>
    <property type="project" value="UniProtKB-UniRule"/>
</dbReference>
<dbReference type="CDD" id="cd08428">
    <property type="entry name" value="PBP2_IciA_ArgP"/>
    <property type="match status" value="1"/>
</dbReference>
<dbReference type="FunFam" id="1.10.10.10:FF:000061">
    <property type="entry name" value="HTH-type transcriptional regulator ArgP"/>
    <property type="match status" value="1"/>
</dbReference>
<dbReference type="Gene3D" id="3.40.190.290">
    <property type="match status" value="1"/>
</dbReference>
<dbReference type="Gene3D" id="1.10.10.10">
    <property type="entry name" value="Winged helix-like DNA-binding domain superfamily/Winged helix DNA-binding domain"/>
    <property type="match status" value="1"/>
</dbReference>
<dbReference type="HAMAP" id="MF_00513">
    <property type="entry name" value="HTH_type_ArgP"/>
    <property type="match status" value="1"/>
</dbReference>
<dbReference type="InterPro" id="IPR017685">
    <property type="entry name" value="ArgP"/>
</dbReference>
<dbReference type="InterPro" id="IPR023490">
    <property type="entry name" value="ArgP_gammaproteobact"/>
</dbReference>
<dbReference type="InterPro" id="IPR050176">
    <property type="entry name" value="LTTR"/>
</dbReference>
<dbReference type="InterPro" id="IPR005119">
    <property type="entry name" value="LysR_subst-bd"/>
</dbReference>
<dbReference type="InterPro" id="IPR000847">
    <property type="entry name" value="Tscrpt_reg_HTH_LysR"/>
</dbReference>
<dbReference type="InterPro" id="IPR036388">
    <property type="entry name" value="WH-like_DNA-bd_sf"/>
</dbReference>
<dbReference type="InterPro" id="IPR036390">
    <property type="entry name" value="WH_DNA-bd_sf"/>
</dbReference>
<dbReference type="NCBIfam" id="TIGR03298">
    <property type="entry name" value="argP"/>
    <property type="match status" value="1"/>
</dbReference>
<dbReference type="NCBIfam" id="NF002964">
    <property type="entry name" value="PRK03635.1"/>
    <property type="match status" value="1"/>
</dbReference>
<dbReference type="NCBIfam" id="NF009888">
    <property type="entry name" value="PRK13348.1"/>
    <property type="match status" value="1"/>
</dbReference>
<dbReference type="PANTHER" id="PTHR30579:SF2">
    <property type="entry name" value="HTH-TYPE TRANSCRIPTIONAL REGULATOR ARGP"/>
    <property type="match status" value="1"/>
</dbReference>
<dbReference type="PANTHER" id="PTHR30579">
    <property type="entry name" value="TRANSCRIPTIONAL REGULATOR"/>
    <property type="match status" value="1"/>
</dbReference>
<dbReference type="Pfam" id="PF00126">
    <property type="entry name" value="HTH_1"/>
    <property type="match status" value="1"/>
</dbReference>
<dbReference type="Pfam" id="PF03466">
    <property type="entry name" value="LysR_substrate"/>
    <property type="match status" value="1"/>
</dbReference>
<dbReference type="PRINTS" id="PR00039">
    <property type="entry name" value="HTHLYSR"/>
</dbReference>
<dbReference type="SUPFAM" id="SSF53850">
    <property type="entry name" value="Periplasmic binding protein-like II"/>
    <property type="match status" value="1"/>
</dbReference>
<dbReference type="SUPFAM" id="SSF46785">
    <property type="entry name" value="Winged helix' DNA-binding domain"/>
    <property type="match status" value="1"/>
</dbReference>
<dbReference type="PROSITE" id="PS50931">
    <property type="entry name" value="HTH_LYSR"/>
    <property type="match status" value="1"/>
</dbReference>